<sequence length="618" mass="67690">MILQNRTFDLNPNDIAGLELVCQTLRNRILEVVSANGGHLSSSLGAVELIVGMHALFDCQKNPFIFDTSHQAYAHKLLTGRFESFSTLRQFKGLSGFTKPSESAYDYFIAGHSSTSVSIGVGVAKAFCLKQALGMPIALLGDGSISAGIFYEALNELGDRKYPMIMILNDNEMSISTPIGALSKALSQLMKGPFYQSFRSKVKKILSTLPESVNYLASRFEESFKLITPGVFFEELGINYIGPINGHDLSAIIETLKLAKELKEPVLIHAQTLKGKGYKIAEGRYEKWHGVGPFDLDTGLSKKSKSAILSPTEAYSNTLLELAKKDEKIVGVTAAMPSGTGLDKLIDAYPLRFFDVAIAEQHALTSSSAMAKEGFKPFVSIYSTFLQRAYDSIVHDACISSLPIKLAIDRAGIVGEDGETHQGLLDVSYLRSIPNMVIFAPRDNETLKNAVRFANEHDSSPCAFRYPRGSFVLKEGVFEPSGFVLGQSELLKKEGEILLIGYGNGVGRAHLVQLALKEKNIECALLDLRFLKPLDPNLSAIVAPYQKLYVFSDNYKLGGVASAILEFLSEQNILKPVKSFEIIDEFIMHGNTALVEKSLGLDTESLTDAILKDLGQER</sequence>
<comment type="function">
    <text evidence="1">Catalyzes the acyloin condensation reaction between C atoms 2 and 3 of pyruvate and glyceraldehyde 3-phosphate to yield 1-deoxy-D-xylulose-5-phosphate (DXP).</text>
</comment>
<comment type="catalytic activity">
    <reaction evidence="1">
        <text>D-glyceraldehyde 3-phosphate + pyruvate + H(+) = 1-deoxy-D-xylulose 5-phosphate + CO2</text>
        <dbReference type="Rhea" id="RHEA:12605"/>
        <dbReference type="ChEBI" id="CHEBI:15361"/>
        <dbReference type="ChEBI" id="CHEBI:15378"/>
        <dbReference type="ChEBI" id="CHEBI:16526"/>
        <dbReference type="ChEBI" id="CHEBI:57792"/>
        <dbReference type="ChEBI" id="CHEBI:59776"/>
        <dbReference type="EC" id="2.2.1.7"/>
    </reaction>
</comment>
<comment type="cofactor">
    <cofactor evidence="1">
        <name>Mg(2+)</name>
        <dbReference type="ChEBI" id="CHEBI:18420"/>
    </cofactor>
    <text evidence="1">Binds 1 Mg(2+) ion per subunit.</text>
</comment>
<comment type="cofactor">
    <cofactor evidence="1">
        <name>thiamine diphosphate</name>
        <dbReference type="ChEBI" id="CHEBI:58937"/>
    </cofactor>
    <text evidence="1">Binds 1 thiamine pyrophosphate per subunit.</text>
</comment>
<comment type="pathway">
    <text evidence="1">Metabolic intermediate biosynthesis; 1-deoxy-D-xylulose 5-phosphate biosynthesis; 1-deoxy-D-xylulose 5-phosphate from D-glyceraldehyde 3-phosphate and pyruvate: step 1/1.</text>
</comment>
<comment type="subunit">
    <text evidence="1">Homodimer.</text>
</comment>
<comment type="similarity">
    <text evidence="1">Belongs to the transketolase family. DXPS subfamily.</text>
</comment>
<protein>
    <recommendedName>
        <fullName evidence="1">1-deoxy-D-xylulose-5-phosphate synthase</fullName>
        <ecNumber evidence="1">2.2.1.7</ecNumber>
    </recommendedName>
    <alternativeName>
        <fullName evidence="1">1-deoxyxylulose-5-phosphate synthase</fullName>
        <shortName evidence="1">DXP synthase</shortName>
        <shortName evidence="1">DXPS</shortName>
    </alternativeName>
</protein>
<evidence type="ECO:0000255" key="1">
    <source>
        <dbReference type="HAMAP-Rule" id="MF_00315"/>
    </source>
</evidence>
<accession>B5ZAB7</accession>
<name>DXS_HELPG</name>
<keyword id="KW-0414">Isoprene biosynthesis</keyword>
<keyword id="KW-0460">Magnesium</keyword>
<keyword id="KW-0479">Metal-binding</keyword>
<keyword id="KW-1185">Reference proteome</keyword>
<keyword id="KW-0784">Thiamine biosynthesis</keyword>
<keyword id="KW-0786">Thiamine pyrophosphate</keyword>
<keyword id="KW-0808">Transferase</keyword>
<dbReference type="EC" id="2.2.1.7" evidence="1"/>
<dbReference type="EMBL" id="CP001173">
    <property type="protein sequence ID" value="ACI27097.1"/>
    <property type="molecule type" value="Genomic_DNA"/>
</dbReference>
<dbReference type="SMR" id="B5ZAB7"/>
<dbReference type="KEGG" id="hpg:HPG27_331"/>
<dbReference type="HOGENOM" id="CLU_009227_1_4_7"/>
<dbReference type="UniPathway" id="UPA00064">
    <property type="reaction ID" value="UER00091"/>
</dbReference>
<dbReference type="Proteomes" id="UP000001735">
    <property type="component" value="Chromosome"/>
</dbReference>
<dbReference type="GO" id="GO:0005829">
    <property type="term" value="C:cytosol"/>
    <property type="evidence" value="ECO:0007669"/>
    <property type="project" value="TreeGrafter"/>
</dbReference>
<dbReference type="GO" id="GO:0008661">
    <property type="term" value="F:1-deoxy-D-xylulose-5-phosphate synthase activity"/>
    <property type="evidence" value="ECO:0007669"/>
    <property type="project" value="UniProtKB-UniRule"/>
</dbReference>
<dbReference type="GO" id="GO:0000287">
    <property type="term" value="F:magnesium ion binding"/>
    <property type="evidence" value="ECO:0007669"/>
    <property type="project" value="UniProtKB-UniRule"/>
</dbReference>
<dbReference type="GO" id="GO:0030976">
    <property type="term" value="F:thiamine pyrophosphate binding"/>
    <property type="evidence" value="ECO:0007669"/>
    <property type="project" value="UniProtKB-UniRule"/>
</dbReference>
<dbReference type="GO" id="GO:0052865">
    <property type="term" value="P:1-deoxy-D-xylulose 5-phosphate biosynthetic process"/>
    <property type="evidence" value="ECO:0007669"/>
    <property type="project" value="UniProtKB-UniPathway"/>
</dbReference>
<dbReference type="GO" id="GO:0019288">
    <property type="term" value="P:isopentenyl diphosphate biosynthetic process, methylerythritol 4-phosphate pathway"/>
    <property type="evidence" value="ECO:0007669"/>
    <property type="project" value="TreeGrafter"/>
</dbReference>
<dbReference type="GO" id="GO:0016114">
    <property type="term" value="P:terpenoid biosynthetic process"/>
    <property type="evidence" value="ECO:0007669"/>
    <property type="project" value="UniProtKB-UniRule"/>
</dbReference>
<dbReference type="GO" id="GO:0009228">
    <property type="term" value="P:thiamine biosynthetic process"/>
    <property type="evidence" value="ECO:0007669"/>
    <property type="project" value="UniProtKB-UniRule"/>
</dbReference>
<dbReference type="CDD" id="cd02007">
    <property type="entry name" value="TPP_DXS"/>
    <property type="match status" value="1"/>
</dbReference>
<dbReference type="CDD" id="cd07033">
    <property type="entry name" value="TPP_PYR_DXS_TK_like"/>
    <property type="match status" value="1"/>
</dbReference>
<dbReference type="FunFam" id="3.40.50.970:FF:000005">
    <property type="entry name" value="1-deoxy-D-xylulose-5-phosphate synthase"/>
    <property type="match status" value="1"/>
</dbReference>
<dbReference type="Gene3D" id="3.40.50.920">
    <property type="match status" value="1"/>
</dbReference>
<dbReference type="Gene3D" id="3.40.50.970">
    <property type="match status" value="2"/>
</dbReference>
<dbReference type="HAMAP" id="MF_00315">
    <property type="entry name" value="DXP_synth"/>
    <property type="match status" value="1"/>
</dbReference>
<dbReference type="InterPro" id="IPR005477">
    <property type="entry name" value="Dxylulose-5-P_synthase"/>
</dbReference>
<dbReference type="InterPro" id="IPR029061">
    <property type="entry name" value="THDP-binding"/>
</dbReference>
<dbReference type="InterPro" id="IPR009014">
    <property type="entry name" value="Transketo_C/PFOR_II"/>
</dbReference>
<dbReference type="InterPro" id="IPR005475">
    <property type="entry name" value="Transketolase-like_Pyr-bd"/>
</dbReference>
<dbReference type="InterPro" id="IPR020826">
    <property type="entry name" value="Transketolase_BS"/>
</dbReference>
<dbReference type="InterPro" id="IPR033248">
    <property type="entry name" value="Transketolase_C"/>
</dbReference>
<dbReference type="InterPro" id="IPR049557">
    <property type="entry name" value="Transketolase_CS"/>
</dbReference>
<dbReference type="NCBIfam" id="TIGR00204">
    <property type="entry name" value="dxs"/>
    <property type="match status" value="1"/>
</dbReference>
<dbReference type="NCBIfam" id="NF003933">
    <property type="entry name" value="PRK05444.2-2"/>
    <property type="match status" value="1"/>
</dbReference>
<dbReference type="PANTHER" id="PTHR43322">
    <property type="entry name" value="1-D-DEOXYXYLULOSE 5-PHOSPHATE SYNTHASE-RELATED"/>
    <property type="match status" value="1"/>
</dbReference>
<dbReference type="PANTHER" id="PTHR43322:SF5">
    <property type="entry name" value="1-DEOXY-D-XYLULOSE-5-PHOSPHATE SYNTHASE, CHLOROPLASTIC"/>
    <property type="match status" value="1"/>
</dbReference>
<dbReference type="Pfam" id="PF13292">
    <property type="entry name" value="DXP_synthase_N"/>
    <property type="match status" value="1"/>
</dbReference>
<dbReference type="Pfam" id="PF02779">
    <property type="entry name" value="Transket_pyr"/>
    <property type="match status" value="1"/>
</dbReference>
<dbReference type="Pfam" id="PF02780">
    <property type="entry name" value="Transketolase_C"/>
    <property type="match status" value="1"/>
</dbReference>
<dbReference type="SMART" id="SM00861">
    <property type="entry name" value="Transket_pyr"/>
    <property type="match status" value="1"/>
</dbReference>
<dbReference type="SUPFAM" id="SSF52518">
    <property type="entry name" value="Thiamin diphosphate-binding fold (THDP-binding)"/>
    <property type="match status" value="2"/>
</dbReference>
<dbReference type="SUPFAM" id="SSF52922">
    <property type="entry name" value="TK C-terminal domain-like"/>
    <property type="match status" value="1"/>
</dbReference>
<dbReference type="PROSITE" id="PS00801">
    <property type="entry name" value="TRANSKETOLASE_1"/>
    <property type="match status" value="1"/>
</dbReference>
<dbReference type="PROSITE" id="PS00802">
    <property type="entry name" value="TRANSKETOLASE_2"/>
    <property type="match status" value="1"/>
</dbReference>
<proteinExistence type="inferred from homology"/>
<reference key="1">
    <citation type="journal article" date="2009" name="J. Bacteriol.">
        <title>The complete genome sequence of Helicobacter pylori strain G27.</title>
        <authorList>
            <person name="Baltrus D.A."/>
            <person name="Amieva M.R."/>
            <person name="Covacci A."/>
            <person name="Lowe T.M."/>
            <person name="Merrell D.S."/>
            <person name="Ottemann K.M."/>
            <person name="Stein M."/>
            <person name="Salama N.R."/>
            <person name="Guillemin K."/>
        </authorList>
    </citation>
    <scope>NUCLEOTIDE SEQUENCE [LARGE SCALE GENOMIC DNA]</scope>
    <source>
        <strain>G27</strain>
    </source>
</reference>
<gene>
    <name evidence="1" type="primary">dxs</name>
    <name type="ordered locus">HPG27_331</name>
</gene>
<feature type="chain" id="PRO_1000115746" description="1-deoxy-D-xylulose-5-phosphate synthase">
    <location>
        <begin position="1"/>
        <end position="618"/>
    </location>
</feature>
<feature type="binding site" evidence="1">
    <location>
        <position position="70"/>
    </location>
    <ligand>
        <name>thiamine diphosphate</name>
        <dbReference type="ChEBI" id="CHEBI:58937"/>
    </ligand>
</feature>
<feature type="binding site" evidence="1">
    <location>
        <begin position="111"/>
        <end position="113"/>
    </location>
    <ligand>
        <name>thiamine diphosphate</name>
        <dbReference type="ChEBI" id="CHEBI:58937"/>
    </ligand>
</feature>
<feature type="binding site" evidence="1">
    <location>
        <position position="142"/>
    </location>
    <ligand>
        <name>Mg(2+)</name>
        <dbReference type="ChEBI" id="CHEBI:18420"/>
    </ligand>
</feature>
<feature type="binding site" evidence="1">
    <location>
        <begin position="143"/>
        <end position="144"/>
    </location>
    <ligand>
        <name>thiamine diphosphate</name>
        <dbReference type="ChEBI" id="CHEBI:58937"/>
    </ligand>
</feature>
<feature type="binding site" evidence="1">
    <location>
        <position position="171"/>
    </location>
    <ligand>
        <name>Mg(2+)</name>
        <dbReference type="ChEBI" id="CHEBI:18420"/>
    </ligand>
</feature>
<feature type="binding site" evidence="1">
    <location>
        <position position="171"/>
    </location>
    <ligand>
        <name>thiamine diphosphate</name>
        <dbReference type="ChEBI" id="CHEBI:58937"/>
    </ligand>
</feature>
<feature type="binding site" evidence="1">
    <location>
        <position position="278"/>
    </location>
    <ligand>
        <name>thiamine diphosphate</name>
        <dbReference type="ChEBI" id="CHEBI:58937"/>
    </ligand>
</feature>
<feature type="binding site" evidence="1">
    <location>
        <position position="360"/>
    </location>
    <ligand>
        <name>thiamine diphosphate</name>
        <dbReference type="ChEBI" id="CHEBI:58937"/>
    </ligand>
</feature>
<organism>
    <name type="scientific">Helicobacter pylori (strain G27)</name>
    <dbReference type="NCBI Taxonomy" id="563041"/>
    <lineage>
        <taxon>Bacteria</taxon>
        <taxon>Pseudomonadati</taxon>
        <taxon>Campylobacterota</taxon>
        <taxon>Epsilonproteobacteria</taxon>
        <taxon>Campylobacterales</taxon>
        <taxon>Helicobacteraceae</taxon>
        <taxon>Helicobacter</taxon>
    </lineage>
</organism>